<dbReference type="EC" id="3.4.21.-"/>
<dbReference type="SMR" id="P0DJG3"/>
<dbReference type="GO" id="GO:0005576">
    <property type="term" value="C:extracellular region"/>
    <property type="evidence" value="ECO:0007669"/>
    <property type="project" value="UniProtKB-SubCell"/>
</dbReference>
<dbReference type="GO" id="GO:0030141">
    <property type="term" value="C:secretory granule"/>
    <property type="evidence" value="ECO:0007669"/>
    <property type="project" value="TreeGrafter"/>
</dbReference>
<dbReference type="GO" id="GO:0004252">
    <property type="term" value="F:serine-type endopeptidase activity"/>
    <property type="evidence" value="ECO:0007669"/>
    <property type="project" value="InterPro"/>
</dbReference>
<dbReference type="GO" id="GO:0090729">
    <property type="term" value="F:toxin activity"/>
    <property type="evidence" value="ECO:0007669"/>
    <property type="project" value="UniProtKB-KW"/>
</dbReference>
<dbReference type="GO" id="GO:0006508">
    <property type="term" value="P:proteolysis"/>
    <property type="evidence" value="ECO:0007669"/>
    <property type="project" value="UniProtKB-KW"/>
</dbReference>
<dbReference type="Gene3D" id="2.40.10.10">
    <property type="entry name" value="Trypsin-like serine proteases"/>
    <property type="match status" value="2"/>
</dbReference>
<dbReference type="InterPro" id="IPR001357">
    <property type="entry name" value="BRCT_dom"/>
</dbReference>
<dbReference type="InterPro" id="IPR009003">
    <property type="entry name" value="Peptidase_S1_PA"/>
</dbReference>
<dbReference type="InterPro" id="IPR043504">
    <property type="entry name" value="Peptidase_S1_PA_chymotrypsin"/>
</dbReference>
<dbReference type="InterPro" id="IPR001254">
    <property type="entry name" value="Trypsin_dom"/>
</dbReference>
<dbReference type="PANTHER" id="PTHR24271:SF47">
    <property type="entry name" value="KALLIKREIN-1"/>
    <property type="match status" value="1"/>
</dbReference>
<dbReference type="PANTHER" id="PTHR24271">
    <property type="entry name" value="KALLIKREIN-RELATED"/>
    <property type="match status" value="1"/>
</dbReference>
<dbReference type="Pfam" id="PF00089">
    <property type="entry name" value="Trypsin"/>
    <property type="match status" value="2"/>
</dbReference>
<dbReference type="SMART" id="SM00020">
    <property type="entry name" value="Tryp_SPc"/>
    <property type="match status" value="1"/>
</dbReference>
<dbReference type="SUPFAM" id="SSF50494">
    <property type="entry name" value="Trypsin-like serine proteases"/>
    <property type="match status" value="1"/>
</dbReference>
<dbReference type="PROSITE" id="PS50240">
    <property type="entry name" value="TRYPSIN_DOM"/>
    <property type="match status" value="1"/>
</dbReference>
<proteinExistence type="evidence at protein level"/>
<feature type="chain" id="PRO_0000416596" description="Thrombin-like enzyme TLBan">
    <location>
        <begin position="1"/>
        <end position="119"/>
    </location>
</feature>
<feature type="domain" description="Peptidase S1" evidence="2">
    <location>
        <begin position="1"/>
        <end position="112"/>
    </location>
</feature>
<feature type="active site" description="Charge relay system" evidence="1">
    <location>
        <position position="40"/>
    </location>
</feature>
<feature type="active site" description="Charge relay system" evidence="1">
    <location>
        <position position="59"/>
    </location>
</feature>
<feature type="disulfide bond" evidence="2">
    <location>
        <begin position="7"/>
        <end status="unknown"/>
    </location>
</feature>
<feature type="disulfide bond" evidence="2">
    <location>
        <begin position="25"/>
        <end status="unknown"/>
    </location>
</feature>
<feature type="disulfide bond" evidence="2">
    <location>
        <begin position="54"/>
        <end position="118"/>
    </location>
</feature>
<feature type="disulfide bond" evidence="2">
    <location>
        <begin position="91"/>
        <end status="unknown"/>
    </location>
</feature>
<feature type="non-consecutive residues" evidence="4">
    <location>
        <begin position="21"/>
        <end position="22"/>
    </location>
</feature>
<feature type="non-consecutive residues" evidence="4">
    <location>
        <begin position="40"/>
        <end position="41"/>
    </location>
</feature>
<feature type="non-consecutive residues" evidence="4">
    <location>
        <begin position="58"/>
        <end position="59"/>
    </location>
</feature>
<feature type="non-consecutive residues" evidence="4">
    <location>
        <begin position="93"/>
        <end position="94"/>
    </location>
</feature>
<keyword id="KW-1204">Blood coagulation cascade activating toxin</keyword>
<keyword id="KW-0903">Direct protein sequencing</keyword>
<keyword id="KW-1015">Disulfide bond</keyword>
<keyword id="KW-1206">Fibrinogenolytic toxin</keyword>
<keyword id="KW-0325">Glycoprotein</keyword>
<keyword id="KW-1199">Hemostasis impairing toxin</keyword>
<keyword id="KW-0378">Hydrolase</keyword>
<keyword id="KW-1202">Platelet aggregation activating toxin</keyword>
<keyword id="KW-0645">Protease</keyword>
<keyword id="KW-0964">Secreted</keyword>
<keyword id="KW-0720">Serine protease</keyword>
<keyword id="KW-0730">Sialic acid</keyword>
<keyword id="KW-0800">Toxin</keyword>
<evidence type="ECO:0000250" key="1"/>
<evidence type="ECO:0000255" key="2">
    <source>
        <dbReference type="PROSITE-ProRule" id="PRU00274"/>
    </source>
</evidence>
<evidence type="ECO:0000269" key="3">
    <source>
    </source>
</evidence>
<evidence type="ECO:0000305" key="4"/>
<reference key="1">
    <citation type="journal article" date="2012" name="Toxicon">
        <title>Functional and structural characterization of a new serine protease with thrombin-like activity TLBan from Bothrops andianus (Andean Lancehead) snake venom.</title>
        <authorList>
            <person name="Valeriano-Zapana J.A."/>
            <person name="Segovia-Cruz F.S."/>
            <person name="Rojas-Hualpa J.M."/>
            <person name="Martins-de-Souza D."/>
            <person name="Ponce-Soto L.A."/>
            <person name="Marangoni S."/>
        </authorList>
    </citation>
    <scope>PROTEIN SEQUENCE</scope>
    <scope>FUNCTION</scope>
    <scope>ACTIVITY REGULATION</scope>
    <scope>BIOPHYSICOCHEMICAL PROPERTIES</scope>
    <scope>SUBUNIT</scope>
    <scope>GLYCOSYLATION</scope>
    <scope>SIALIC ACID</scope>
    <scope>MASS SPECTROMETRY</scope>
    <source>
        <tissue>Venom</tissue>
    </source>
</reference>
<comment type="function">
    <text evidence="3">Thrombin-like snake venom serine protease, with high clotting activity in vitro. Also has fibrinogenolytic ability, showing a fast degradation of fibrinogen Aalpha chain (FGA), a slow degradation of Bbeta chain (FGB) and no degradation of gamma chain. Also causes platelet aggregation in platelet rich plasma (PRP) and washed platelet suspension.</text>
</comment>
<comment type="activity regulation">
    <text evidence="3">Strongly inhibited by PMSF and slightly inhibited by EDTA and soybean trypsin inhibitor.</text>
</comment>
<comment type="biophysicochemical properties">
    <kinetics>
        <KM evidence="3">0.79 M for N-alpha-benzoyl-DL-Arg-p-nitroanilide (DL-BApNA)</KM>
        <Vmax evidence="3">0.54 nmol/min/mg enzyme with N-alpha-benzoyl-DL-Arg-p-nitroanilide (DL-BApNA) as substrate</Vmax>
    </kinetics>
    <phDependence>
        <text evidence="3">Optimum pH is 8.0.</text>
    </phDependence>
    <temperatureDependence>
        <text evidence="3">Optimum temperature is 45 degrees Celsius.</text>
    </temperatureDependence>
</comment>
<comment type="subunit">
    <text evidence="3">Monomer.</text>
</comment>
<comment type="subcellular location">
    <subcellularLocation>
        <location>Secreted</location>
    </subcellularLocation>
</comment>
<comment type="tissue specificity">
    <text>Expressed by the venom gland.</text>
</comment>
<comment type="PTM">
    <text evidence="3">Contains both N-linked carbohydrates and sialic acid.</text>
</comment>
<comment type="mass spectrometry"/>
<comment type="similarity">
    <text evidence="2">Belongs to the peptidase S1 family. Snake venom subfamily.</text>
</comment>
<comment type="caution">
    <text evidence="4">Ile, Leu, Gln and Lys residues were impossible to discriminate with the method employed and are all assigned by comparison with orthologs.</text>
</comment>
<protein>
    <recommendedName>
        <fullName>Thrombin-like enzyme TLBan</fullName>
        <shortName>SVTLE TLBan</shortName>
        <ecNumber>3.4.21.-</ecNumber>
    </recommendedName>
    <alternativeName>
        <fullName>Fibrinogen-clotting enzyme</fullName>
    </alternativeName>
    <alternativeName>
        <fullName>Snake venom serine protease</fullName>
        <shortName>SVSP</shortName>
    </alternativeName>
</protein>
<sequence>VIGGDECNINEHPFLVALYYSTFFCGMTLINQEWVLTAAHESEKFPKEKYFIFCPNNKDIMLIRLDKPVSNSEHIAPLSLPSSPPSVGSVCRKPALYTKVFDYLLWIQSIIAGNTATCP</sequence>
<name>VSP1_BOTAN</name>
<organism>
    <name type="scientific">Bothrocophias andianus</name>
    <name type="common">Andean lancehead</name>
    <name type="synonym">Bothrops andianus</name>
    <dbReference type="NCBI Taxonomy" id="1144373"/>
    <lineage>
        <taxon>Eukaryota</taxon>
        <taxon>Metazoa</taxon>
        <taxon>Chordata</taxon>
        <taxon>Craniata</taxon>
        <taxon>Vertebrata</taxon>
        <taxon>Euteleostomi</taxon>
        <taxon>Lepidosauria</taxon>
        <taxon>Squamata</taxon>
        <taxon>Bifurcata</taxon>
        <taxon>Unidentata</taxon>
        <taxon>Episquamata</taxon>
        <taxon>Toxicofera</taxon>
        <taxon>Serpentes</taxon>
        <taxon>Colubroidea</taxon>
        <taxon>Viperidae</taxon>
        <taxon>Crotalinae</taxon>
        <taxon>Bothrocophias</taxon>
    </lineage>
</organism>
<accession>P0DJG3</accession>